<evidence type="ECO:0000255" key="1">
    <source>
        <dbReference type="HAMAP-Rule" id="MF_01018"/>
    </source>
</evidence>
<protein>
    <recommendedName>
        <fullName evidence="1">ATP phosphoribosyltransferase</fullName>
        <shortName evidence="1">ATP-PRT</shortName>
        <shortName evidence="1">ATP-PRTase</shortName>
        <ecNumber evidence="1">2.4.2.17</ecNumber>
    </recommendedName>
</protein>
<feature type="chain" id="PRO_1000063269" description="ATP phosphoribosyltransferase">
    <location>
        <begin position="1"/>
        <end position="217"/>
    </location>
</feature>
<comment type="function">
    <text evidence="1">Catalyzes the condensation of ATP and 5-phosphoribose 1-diphosphate to form N'-(5'-phosphoribosyl)-ATP (PR-ATP). Has a crucial role in the pathway because the rate of histidine biosynthesis seems to be controlled primarily by regulation of HisG enzymatic activity.</text>
</comment>
<comment type="catalytic activity">
    <reaction evidence="1">
        <text>1-(5-phospho-beta-D-ribosyl)-ATP + diphosphate = 5-phospho-alpha-D-ribose 1-diphosphate + ATP</text>
        <dbReference type="Rhea" id="RHEA:18473"/>
        <dbReference type="ChEBI" id="CHEBI:30616"/>
        <dbReference type="ChEBI" id="CHEBI:33019"/>
        <dbReference type="ChEBI" id="CHEBI:58017"/>
        <dbReference type="ChEBI" id="CHEBI:73183"/>
        <dbReference type="EC" id="2.4.2.17"/>
    </reaction>
</comment>
<comment type="pathway">
    <text evidence="1">Amino-acid biosynthesis; L-histidine biosynthesis; L-histidine from 5-phospho-alpha-D-ribose 1-diphosphate: step 1/9.</text>
</comment>
<comment type="subunit">
    <text evidence="1">Heteromultimer composed of HisG and HisZ subunits.</text>
</comment>
<comment type="subcellular location">
    <subcellularLocation>
        <location evidence="1">Cytoplasm</location>
    </subcellularLocation>
</comment>
<comment type="domain">
    <text>Lacks the C-terminal regulatory region which is replaced by HisZ.</text>
</comment>
<comment type="similarity">
    <text evidence="1">Belongs to the ATP phosphoribosyltransferase family. Short subfamily.</text>
</comment>
<keyword id="KW-0028">Amino-acid biosynthesis</keyword>
<keyword id="KW-0067">ATP-binding</keyword>
<keyword id="KW-0963">Cytoplasm</keyword>
<keyword id="KW-0328">Glycosyltransferase</keyword>
<keyword id="KW-0368">Histidine biosynthesis</keyword>
<keyword id="KW-0547">Nucleotide-binding</keyword>
<keyword id="KW-0808">Transferase</keyword>
<organism>
    <name type="scientific">Burkholderia ambifaria (strain ATCC BAA-244 / DSM 16087 / CCUG 44356 / LMG 19182 / AMMD)</name>
    <name type="common">Burkholderia cepacia (strain AMMD)</name>
    <dbReference type="NCBI Taxonomy" id="339670"/>
    <lineage>
        <taxon>Bacteria</taxon>
        <taxon>Pseudomonadati</taxon>
        <taxon>Pseudomonadota</taxon>
        <taxon>Betaproteobacteria</taxon>
        <taxon>Burkholderiales</taxon>
        <taxon>Burkholderiaceae</taxon>
        <taxon>Burkholderia</taxon>
        <taxon>Burkholderia cepacia complex</taxon>
    </lineage>
</organism>
<sequence>MTAPLTLALSKGRIFEETLPLLAAAGVQVAEDPETSRKLILPTTDPNLRVIIVRASDVPTYVEYGAADFGVAGKDVLVEHGGSGLYQPIDLNIARCRMSVAVPAGFDYANAVRQGARLRVATKYVETAREHFAAKGVHVDLIKLYGSMELAPLVGLADAIVDLVSSGGTLKANNLVEVEEIMAISSRLVVNQAALKLKRAALKPILDAFERASQNGN</sequence>
<accession>Q0BIX1</accession>
<proteinExistence type="inferred from homology"/>
<name>HIS1_BURCM</name>
<dbReference type="EC" id="2.4.2.17" evidence="1"/>
<dbReference type="EMBL" id="CP000440">
    <property type="protein sequence ID" value="ABI85902.1"/>
    <property type="molecule type" value="Genomic_DNA"/>
</dbReference>
<dbReference type="RefSeq" id="WP_006751807.1">
    <property type="nucleotide sequence ID" value="NZ_CP009798.1"/>
</dbReference>
<dbReference type="SMR" id="Q0BIX1"/>
<dbReference type="GeneID" id="93084244"/>
<dbReference type="KEGG" id="bam:Bamb_0342"/>
<dbReference type="PATRIC" id="fig|339670.21.peg.1276"/>
<dbReference type="eggNOG" id="COG0040">
    <property type="taxonomic scope" value="Bacteria"/>
</dbReference>
<dbReference type="UniPathway" id="UPA00031">
    <property type="reaction ID" value="UER00006"/>
</dbReference>
<dbReference type="Proteomes" id="UP000000662">
    <property type="component" value="Chromosome 1"/>
</dbReference>
<dbReference type="GO" id="GO:0005737">
    <property type="term" value="C:cytoplasm"/>
    <property type="evidence" value="ECO:0007669"/>
    <property type="project" value="UniProtKB-SubCell"/>
</dbReference>
<dbReference type="GO" id="GO:0005524">
    <property type="term" value="F:ATP binding"/>
    <property type="evidence" value="ECO:0007669"/>
    <property type="project" value="UniProtKB-KW"/>
</dbReference>
<dbReference type="GO" id="GO:0003879">
    <property type="term" value="F:ATP phosphoribosyltransferase activity"/>
    <property type="evidence" value="ECO:0007669"/>
    <property type="project" value="UniProtKB-UniRule"/>
</dbReference>
<dbReference type="GO" id="GO:0000105">
    <property type="term" value="P:L-histidine biosynthetic process"/>
    <property type="evidence" value="ECO:0007669"/>
    <property type="project" value="UniProtKB-UniRule"/>
</dbReference>
<dbReference type="CDD" id="cd13595">
    <property type="entry name" value="PBP2_HisGs"/>
    <property type="match status" value="1"/>
</dbReference>
<dbReference type="FunFam" id="3.40.190.10:FF:000011">
    <property type="entry name" value="ATP phosphoribosyltransferase"/>
    <property type="match status" value="1"/>
</dbReference>
<dbReference type="Gene3D" id="3.40.190.10">
    <property type="entry name" value="Periplasmic binding protein-like II"/>
    <property type="match status" value="2"/>
</dbReference>
<dbReference type="HAMAP" id="MF_01018">
    <property type="entry name" value="HisG_Short"/>
    <property type="match status" value="1"/>
</dbReference>
<dbReference type="InterPro" id="IPR013820">
    <property type="entry name" value="ATP_PRibTrfase_cat"/>
</dbReference>
<dbReference type="InterPro" id="IPR018198">
    <property type="entry name" value="ATP_PRibTrfase_CS"/>
</dbReference>
<dbReference type="InterPro" id="IPR001348">
    <property type="entry name" value="ATP_PRibTrfase_HisG"/>
</dbReference>
<dbReference type="InterPro" id="IPR024893">
    <property type="entry name" value="ATP_PRibTrfase_HisG_short"/>
</dbReference>
<dbReference type="NCBIfam" id="TIGR00070">
    <property type="entry name" value="hisG"/>
    <property type="match status" value="1"/>
</dbReference>
<dbReference type="PANTHER" id="PTHR21403:SF8">
    <property type="entry name" value="ATP PHOSPHORIBOSYLTRANSFERASE"/>
    <property type="match status" value="1"/>
</dbReference>
<dbReference type="PANTHER" id="PTHR21403">
    <property type="entry name" value="ATP PHOSPHORIBOSYLTRANSFERASE ATP-PRTASE"/>
    <property type="match status" value="1"/>
</dbReference>
<dbReference type="Pfam" id="PF01634">
    <property type="entry name" value="HisG"/>
    <property type="match status" value="1"/>
</dbReference>
<dbReference type="SUPFAM" id="SSF53850">
    <property type="entry name" value="Periplasmic binding protein-like II"/>
    <property type="match status" value="1"/>
</dbReference>
<dbReference type="PROSITE" id="PS01316">
    <property type="entry name" value="ATP_P_PHORIBOSYLTR"/>
    <property type="match status" value="1"/>
</dbReference>
<reference key="1">
    <citation type="submission" date="2006-08" db="EMBL/GenBank/DDBJ databases">
        <title>Complete sequence of chromosome 1 of Burkholderia cepacia AMMD.</title>
        <authorList>
            <person name="Copeland A."/>
            <person name="Lucas S."/>
            <person name="Lapidus A."/>
            <person name="Barry K."/>
            <person name="Detter J.C."/>
            <person name="Glavina del Rio T."/>
            <person name="Hammon N."/>
            <person name="Israni S."/>
            <person name="Pitluck S."/>
            <person name="Bruce D."/>
            <person name="Chain P."/>
            <person name="Malfatti S."/>
            <person name="Shin M."/>
            <person name="Vergez L."/>
            <person name="Schmutz J."/>
            <person name="Larimer F."/>
            <person name="Land M."/>
            <person name="Hauser L."/>
            <person name="Kyrpides N."/>
            <person name="Kim E."/>
            <person name="Parke J."/>
            <person name="Coenye T."/>
            <person name="Konstantinidis K."/>
            <person name="Ramette A."/>
            <person name="Tiedje J."/>
            <person name="Richardson P."/>
        </authorList>
    </citation>
    <scope>NUCLEOTIDE SEQUENCE [LARGE SCALE GENOMIC DNA]</scope>
    <source>
        <strain>ATCC BAA-244 / DSM 16087 / CCUG 44356 / LMG 19182 / AMMD</strain>
    </source>
</reference>
<gene>
    <name evidence="1" type="primary">hisG</name>
    <name type="ordered locus">Bamb_0342</name>
</gene>